<protein>
    <recommendedName>
        <fullName evidence="1">Lipoprotein signal peptidase</fullName>
        <ecNumber evidence="1">3.4.23.36</ecNumber>
    </recommendedName>
    <alternativeName>
        <fullName evidence="1">Prolipoprotein signal peptidase</fullName>
    </alternativeName>
    <alternativeName>
        <fullName evidence="1">Signal peptidase II</fullName>
        <shortName evidence="1">SPase II</shortName>
    </alternativeName>
</protein>
<proteinExistence type="inferred from homology"/>
<accession>A0Q072</accession>
<reference key="1">
    <citation type="journal article" date="2006" name="Nat. Biotechnol.">
        <title>The genome and transcriptomes of the anti-tumor agent Clostridium novyi-NT.</title>
        <authorList>
            <person name="Bettegowda C."/>
            <person name="Huang X."/>
            <person name="Lin J."/>
            <person name="Cheong I."/>
            <person name="Kohli M."/>
            <person name="Szabo S.A."/>
            <person name="Zhang X."/>
            <person name="Diaz L.A. Jr."/>
            <person name="Velculescu V.E."/>
            <person name="Parmigiani G."/>
            <person name="Kinzler K.W."/>
            <person name="Vogelstein B."/>
            <person name="Zhou S."/>
        </authorList>
    </citation>
    <scope>NUCLEOTIDE SEQUENCE [LARGE SCALE GENOMIC DNA]</scope>
    <source>
        <strain>NT</strain>
    </source>
</reference>
<dbReference type="EC" id="3.4.23.36" evidence="1"/>
<dbReference type="EMBL" id="CP000382">
    <property type="protein sequence ID" value="ABK62109.1"/>
    <property type="molecule type" value="Genomic_DNA"/>
</dbReference>
<dbReference type="RefSeq" id="WP_011722028.1">
    <property type="nucleotide sequence ID" value="NC_008593.1"/>
</dbReference>
<dbReference type="SMR" id="A0Q072"/>
<dbReference type="STRING" id="386415.NT01CX_1951"/>
<dbReference type="KEGG" id="cno:NT01CX_1951"/>
<dbReference type="eggNOG" id="COG0597">
    <property type="taxonomic scope" value="Bacteria"/>
</dbReference>
<dbReference type="HOGENOM" id="CLU_083252_3_4_9"/>
<dbReference type="UniPathway" id="UPA00665"/>
<dbReference type="Proteomes" id="UP000008220">
    <property type="component" value="Chromosome"/>
</dbReference>
<dbReference type="GO" id="GO:0005886">
    <property type="term" value="C:plasma membrane"/>
    <property type="evidence" value="ECO:0007669"/>
    <property type="project" value="UniProtKB-SubCell"/>
</dbReference>
<dbReference type="GO" id="GO:0004190">
    <property type="term" value="F:aspartic-type endopeptidase activity"/>
    <property type="evidence" value="ECO:0007669"/>
    <property type="project" value="UniProtKB-UniRule"/>
</dbReference>
<dbReference type="GO" id="GO:0006508">
    <property type="term" value="P:proteolysis"/>
    <property type="evidence" value="ECO:0007669"/>
    <property type="project" value="UniProtKB-KW"/>
</dbReference>
<dbReference type="HAMAP" id="MF_00161">
    <property type="entry name" value="LspA"/>
    <property type="match status" value="1"/>
</dbReference>
<dbReference type="InterPro" id="IPR001872">
    <property type="entry name" value="Peptidase_A8"/>
</dbReference>
<dbReference type="NCBIfam" id="TIGR00077">
    <property type="entry name" value="lspA"/>
    <property type="match status" value="1"/>
</dbReference>
<dbReference type="PANTHER" id="PTHR33695">
    <property type="entry name" value="LIPOPROTEIN SIGNAL PEPTIDASE"/>
    <property type="match status" value="1"/>
</dbReference>
<dbReference type="PANTHER" id="PTHR33695:SF1">
    <property type="entry name" value="LIPOPROTEIN SIGNAL PEPTIDASE"/>
    <property type="match status" value="1"/>
</dbReference>
<dbReference type="Pfam" id="PF01252">
    <property type="entry name" value="Peptidase_A8"/>
    <property type="match status" value="1"/>
</dbReference>
<dbReference type="PRINTS" id="PR00781">
    <property type="entry name" value="LIPOSIGPTASE"/>
</dbReference>
<dbReference type="PROSITE" id="PS00855">
    <property type="entry name" value="SPASE_II"/>
    <property type="match status" value="1"/>
</dbReference>
<keyword id="KW-0064">Aspartyl protease</keyword>
<keyword id="KW-1003">Cell membrane</keyword>
<keyword id="KW-0378">Hydrolase</keyword>
<keyword id="KW-0472">Membrane</keyword>
<keyword id="KW-0645">Protease</keyword>
<keyword id="KW-1185">Reference proteome</keyword>
<keyword id="KW-0812">Transmembrane</keyword>
<keyword id="KW-1133">Transmembrane helix</keyword>
<comment type="function">
    <text evidence="1">This protein specifically catalyzes the removal of signal peptides from prolipoproteins.</text>
</comment>
<comment type="catalytic activity">
    <reaction evidence="1">
        <text>Release of signal peptides from bacterial membrane prolipoproteins. Hydrolyzes -Xaa-Yaa-Zaa-|-(S,diacylglyceryl)Cys-, in which Xaa is hydrophobic (preferably Leu), and Yaa (Ala or Ser) and Zaa (Gly or Ala) have small, neutral side chains.</text>
        <dbReference type="EC" id="3.4.23.36"/>
    </reaction>
</comment>
<comment type="pathway">
    <text evidence="1">Protein modification; lipoprotein biosynthesis (signal peptide cleavage).</text>
</comment>
<comment type="subcellular location">
    <subcellularLocation>
        <location evidence="1">Cell membrane</location>
        <topology evidence="1">Multi-pass membrane protein</topology>
    </subcellularLocation>
</comment>
<comment type="similarity">
    <text evidence="1">Belongs to the peptidase A8 family.</text>
</comment>
<gene>
    <name evidence="1" type="primary">lspA</name>
    <name type="ordered locus">NT01CX_1951</name>
</gene>
<evidence type="ECO:0000255" key="1">
    <source>
        <dbReference type="HAMAP-Rule" id="MF_00161"/>
    </source>
</evidence>
<sequence>MEVLIIIFGIILDRITKLWALKELSSGHEIEIIKNFFSFNYLENRGAAFGIFQGKTVLLVLVTLLIMIGVIYYFIKYRPTSRFMRIGVSFIVSGALGNLYDRIFYKYVVDFILIHYKNVYYYPTFNIADILVVVGTIMLAIFLLREGK</sequence>
<organism>
    <name type="scientific">Clostridium novyi (strain NT)</name>
    <dbReference type="NCBI Taxonomy" id="386415"/>
    <lineage>
        <taxon>Bacteria</taxon>
        <taxon>Bacillati</taxon>
        <taxon>Bacillota</taxon>
        <taxon>Clostridia</taxon>
        <taxon>Eubacteriales</taxon>
        <taxon>Clostridiaceae</taxon>
        <taxon>Clostridium</taxon>
    </lineage>
</organism>
<feature type="chain" id="PRO_0000289369" description="Lipoprotein signal peptidase">
    <location>
        <begin position="1"/>
        <end position="148"/>
    </location>
</feature>
<feature type="transmembrane region" description="Helical" evidence="1">
    <location>
        <begin position="57"/>
        <end position="77"/>
    </location>
</feature>
<feature type="transmembrane region" description="Helical" evidence="1">
    <location>
        <begin position="88"/>
        <end position="105"/>
    </location>
</feature>
<feature type="transmembrane region" description="Helical" evidence="1">
    <location>
        <begin position="124"/>
        <end position="144"/>
    </location>
</feature>
<feature type="active site" evidence="1">
    <location>
        <position position="110"/>
    </location>
</feature>
<feature type="active site" evidence="1">
    <location>
        <position position="129"/>
    </location>
</feature>
<name>LSPA_CLONN</name>